<gene>
    <name evidence="1" type="primary">rpsO</name>
    <name type="ordered locus">Sputcn32_2831</name>
</gene>
<comment type="function">
    <text evidence="1">One of the primary rRNA binding proteins, it binds directly to 16S rRNA where it helps nucleate assembly of the platform of the 30S subunit by binding and bridging several RNA helices of the 16S rRNA.</text>
</comment>
<comment type="function">
    <text evidence="1">Forms an intersubunit bridge (bridge B4) with the 23S rRNA of the 50S subunit in the ribosome.</text>
</comment>
<comment type="subunit">
    <text evidence="1">Part of the 30S ribosomal subunit. Forms a bridge to the 50S subunit in the 70S ribosome, contacting the 23S rRNA.</text>
</comment>
<comment type="similarity">
    <text evidence="1">Belongs to the universal ribosomal protein uS15 family.</text>
</comment>
<sequence length="89" mass="10207">MSLSTEAKAKILAEFGRGENDTGSTEVQVALLTAQINHLQDHFKEHIHDHHSRRGLLRMVSARRKLTAYLKRTDAERYTALIQKLGLRR</sequence>
<feature type="chain" id="PRO_1000054870" description="Small ribosomal subunit protein uS15">
    <location>
        <begin position="1"/>
        <end position="89"/>
    </location>
</feature>
<dbReference type="EMBL" id="CP000681">
    <property type="protein sequence ID" value="ABP76550.1"/>
    <property type="molecule type" value="Genomic_DNA"/>
</dbReference>
<dbReference type="SMR" id="A4Y9B7"/>
<dbReference type="STRING" id="319224.Sputcn32_2831"/>
<dbReference type="KEGG" id="spc:Sputcn32_2831"/>
<dbReference type="eggNOG" id="COG0184">
    <property type="taxonomic scope" value="Bacteria"/>
</dbReference>
<dbReference type="HOGENOM" id="CLU_148518_0_0_6"/>
<dbReference type="GO" id="GO:0022627">
    <property type="term" value="C:cytosolic small ribosomal subunit"/>
    <property type="evidence" value="ECO:0007669"/>
    <property type="project" value="TreeGrafter"/>
</dbReference>
<dbReference type="GO" id="GO:0019843">
    <property type="term" value="F:rRNA binding"/>
    <property type="evidence" value="ECO:0007669"/>
    <property type="project" value="UniProtKB-UniRule"/>
</dbReference>
<dbReference type="GO" id="GO:0003735">
    <property type="term" value="F:structural constituent of ribosome"/>
    <property type="evidence" value="ECO:0007669"/>
    <property type="project" value="InterPro"/>
</dbReference>
<dbReference type="GO" id="GO:0006412">
    <property type="term" value="P:translation"/>
    <property type="evidence" value="ECO:0007669"/>
    <property type="project" value="UniProtKB-UniRule"/>
</dbReference>
<dbReference type="CDD" id="cd00353">
    <property type="entry name" value="Ribosomal_S15p_S13e"/>
    <property type="match status" value="1"/>
</dbReference>
<dbReference type="FunFam" id="1.10.287.10:FF:000002">
    <property type="entry name" value="30S ribosomal protein S15"/>
    <property type="match status" value="1"/>
</dbReference>
<dbReference type="Gene3D" id="6.10.250.3130">
    <property type="match status" value="1"/>
</dbReference>
<dbReference type="Gene3D" id="1.10.287.10">
    <property type="entry name" value="S15/NS1, RNA-binding"/>
    <property type="match status" value="1"/>
</dbReference>
<dbReference type="HAMAP" id="MF_01343_B">
    <property type="entry name" value="Ribosomal_uS15_B"/>
    <property type="match status" value="1"/>
</dbReference>
<dbReference type="InterPro" id="IPR000589">
    <property type="entry name" value="Ribosomal_uS15"/>
</dbReference>
<dbReference type="InterPro" id="IPR005290">
    <property type="entry name" value="Ribosomal_uS15_bac-type"/>
</dbReference>
<dbReference type="InterPro" id="IPR009068">
    <property type="entry name" value="uS15_NS1_RNA-bd_sf"/>
</dbReference>
<dbReference type="NCBIfam" id="TIGR00952">
    <property type="entry name" value="S15_bact"/>
    <property type="match status" value="1"/>
</dbReference>
<dbReference type="PANTHER" id="PTHR23321">
    <property type="entry name" value="RIBOSOMAL PROTEIN S15, BACTERIAL AND ORGANELLAR"/>
    <property type="match status" value="1"/>
</dbReference>
<dbReference type="PANTHER" id="PTHR23321:SF26">
    <property type="entry name" value="SMALL RIBOSOMAL SUBUNIT PROTEIN US15M"/>
    <property type="match status" value="1"/>
</dbReference>
<dbReference type="Pfam" id="PF00312">
    <property type="entry name" value="Ribosomal_S15"/>
    <property type="match status" value="1"/>
</dbReference>
<dbReference type="SMART" id="SM01387">
    <property type="entry name" value="Ribosomal_S15"/>
    <property type="match status" value="1"/>
</dbReference>
<dbReference type="SUPFAM" id="SSF47060">
    <property type="entry name" value="S15/NS1 RNA-binding domain"/>
    <property type="match status" value="1"/>
</dbReference>
<dbReference type="PROSITE" id="PS00362">
    <property type="entry name" value="RIBOSOMAL_S15"/>
    <property type="match status" value="1"/>
</dbReference>
<organism>
    <name type="scientific">Shewanella putrefaciens (strain CN-32 / ATCC BAA-453)</name>
    <dbReference type="NCBI Taxonomy" id="319224"/>
    <lineage>
        <taxon>Bacteria</taxon>
        <taxon>Pseudomonadati</taxon>
        <taxon>Pseudomonadota</taxon>
        <taxon>Gammaproteobacteria</taxon>
        <taxon>Alteromonadales</taxon>
        <taxon>Shewanellaceae</taxon>
        <taxon>Shewanella</taxon>
    </lineage>
</organism>
<keyword id="KW-0687">Ribonucleoprotein</keyword>
<keyword id="KW-0689">Ribosomal protein</keyword>
<keyword id="KW-0694">RNA-binding</keyword>
<keyword id="KW-0699">rRNA-binding</keyword>
<reference key="1">
    <citation type="submission" date="2007-04" db="EMBL/GenBank/DDBJ databases">
        <title>Complete sequence of Shewanella putrefaciens CN-32.</title>
        <authorList>
            <consortium name="US DOE Joint Genome Institute"/>
            <person name="Copeland A."/>
            <person name="Lucas S."/>
            <person name="Lapidus A."/>
            <person name="Barry K."/>
            <person name="Detter J.C."/>
            <person name="Glavina del Rio T."/>
            <person name="Hammon N."/>
            <person name="Israni S."/>
            <person name="Dalin E."/>
            <person name="Tice H."/>
            <person name="Pitluck S."/>
            <person name="Chain P."/>
            <person name="Malfatti S."/>
            <person name="Shin M."/>
            <person name="Vergez L."/>
            <person name="Schmutz J."/>
            <person name="Larimer F."/>
            <person name="Land M."/>
            <person name="Hauser L."/>
            <person name="Kyrpides N."/>
            <person name="Mikhailova N."/>
            <person name="Romine M.F."/>
            <person name="Fredrickson J."/>
            <person name="Tiedje J."/>
            <person name="Richardson P."/>
        </authorList>
    </citation>
    <scope>NUCLEOTIDE SEQUENCE [LARGE SCALE GENOMIC DNA]</scope>
    <source>
        <strain>CN-32 / ATCC BAA-453</strain>
    </source>
</reference>
<protein>
    <recommendedName>
        <fullName evidence="1">Small ribosomal subunit protein uS15</fullName>
    </recommendedName>
    <alternativeName>
        <fullName evidence="2">30S ribosomal protein S15</fullName>
    </alternativeName>
</protein>
<name>RS15_SHEPC</name>
<proteinExistence type="inferred from homology"/>
<evidence type="ECO:0000255" key="1">
    <source>
        <dbReference type="HAMAP-Rule" id="MF_01343"/>
    </source>
</evidence>
<evidence type="ECO:0000305" key="2"/>
<accession>A4Y9B7</accession>